<keyword id="KW-0007">Acetylation</keyword>
<keyword id="KW-0025">Alternative splicing</keyword>
<keyword id="KW-0175">Coiled coil</keyword>
<keyword id="KW-0472">Membrane</keyword>
<keyword id="KW-0597">Phosphoprotein</keyword>
<keyword id="KW-1185">Reference proteome</keyword>
<keyword id="KW-0735">Signal-anchor</keyword>
<keyword id="KW-0812">Transmembrane</keyword>
<keyword id="KW-1133">Transmembrane helix</keyword>
<protein>
    <recommendedName>
        <fullName evidence="5">Protein GOLM2</fullName>
    </recommendedName>
    <alternativeName>
        <fullName>Cancer susceptibility candidate gene 4 protein homolog</fullName>
        <shortName>CASC4</shortName>
    </alternativeName>
    <alternativeName>
        <fullName evidence="5">Golgi membrane protein 2</fullName>
    </alternativeName>
</protein>
<dbReference type="EMBL" id="AY484583">
    <property type="protein sequence ID" value="AAR26704.1"/>
    <property type="molecule type" value="mRNA"/>
</dbReference>
<dbReference type="EMBL" id="AY484585">
    <property type="protein sequence ID" value="AAR26705.1"/>
    <property type="status" value="ALT_FRAME"/>
    <property type="molecule type" value="mRNA"/>
</dbReference>
<dbReference type="EMBL" id="AL845286">
    <property type="status" value="NOT_ANNOTATED_CDS"/>
    <property type="molecule type" value="Genomic_DNA"/>
</dbReference>
<dbReference type="EMBL" id="BC064446">
    <property type="protein sequence ID" value="AAH64446.1"/>
    <property type="molecule type" value="mRNA"/>
</dbReference>
<dbReference type="EMBL" id="AK080364">
    <property type="protein sequence ID" value="BAC37891.1"/>
    <property type="molecule type" value="mRNA"/>
</dbReference>
<dbReference type="CCDS" id="CCDS16650.1">
    <molecule id="Q6P2L7-2"/>
</dbReference>
<dbReference type="CCDS" id="CCDS50686.1">
    <molecule id="Q6P2L7-3"/>
</dbReference>
<dbReference type="CCDS" id="CCDS57183.1">
    <molecule id="Q6P2L7-1"/>
</dbReference>
<dbReference type="RefSeq" id="NP_001192298.1">
    <molecule id="Q6P2L7-1"/>
    <property type="nucleotide sequence ID" value="NM_001205369.1"/>
</dbReference>
<dbReference type="RefSeq" id="NP_796028.2">
    <molecule id="Q6P2L7-2"/>
    <property type="nucleotide sequence ID" value="NM_177054.5"/>
</dbReference>
<dbReference type="RefSeq" id="NP_950239.2">
    <molecule id="Q6P2L7-3"/>
    <property type="nucleotide sequence ID" value="NM_199038.3"/>
</dbReference>
<dbReference type="SMR" id="Q6P2L7"/>
<dbReference type="BioGRID" id="235680">
    <property type="interactions" value="3"/>
</dbReference>
<dbReference type="FunCoup" id="Q6P2L7">
    <property type="interactions" value="2077"/>
</dbReference>
<dbReference type="STRING" id="10090.ENSMUSP00000077811"/>
<dbReference type="GlyGen" id="Q6P2L7">
    <property type="glycosylation" value="2 sites, 2 N-linked glycans (2 sites)"/>
</dbReference>
<dbReference type="iPTMnet" id="Q6P2L7"/>
<dbReference type="PhosphoSitePlus" id="Q6P2L7"/>
<dbReference type="jPOST" id="Q6P2L7"/>
<dbReference type="PaxDb" id="10090-ENSMUSP00000087357"/>
<dbReference type="PeptideAtlas" id="Q6P2L7"/>
<dbReference type="ProteomicsDB" id="281215">
    <molecule id="Q6P2L7-1"/>
</dbReference>
<dbReference type="ProteomicsDB" id="281216">
    <molecule id="Q6P2L7-2"/>
</dbReference>
<dbReference type="ProteomicsDB" id="281217">
    <molecule id="Q6P2L7-3"/>
</dbReference>
<dbReference type="Pumba" id="Q6P2L7"/>
<dbReference type="Antibodypedia" id="55771">
    <property type="antibodies" value="88 antibodies from 17 providers"/>
</dbReference>
<dbReference type="DNASU" id="319996"/>
<dbReference type="Ensembl" id="ENSMUST00000078752.10">
    <molecule id="Q6P2L7-1"/>
    <property type="protein sequence ID" value="ENSMUSP00000077811.4"/>
    <property type="gene ID" value="ENSMUSG00000060227.16"/>
</dbReference>
<dbReference type="Ensembl" id="ENSMUST00000089912.12">
    <molecule id="Q6P2L7-2"/>
    <property type="protein sequence ID" value="ENSMUSP00000087357.6"/>
    <property type="gene ID" value="ENSMUSG00000060227.16"/>
</dbReference>
<dbReference type="Ensembl" id="ENSMUST00000089915.10">
    <molecule id="Q6P2L7-3"/>
    <property type="protein sequence ID" value="ENSMUSP00000087360.4"/>
    <property type="gene ID" value="ENSMUSG00000060227.16"/>
</dbReference>
<dbReference type="GeneID" id="319996"/>
<dbReference type="KEGG" id="mmu:319996"/>
<dbReference type="UCSC" id="uc008lzr.2">
    <molecule id="Q6P2L7-1"/>
    <property type="organism name" value="mouse"/>
</dbReference>
<dbReference type="UCSC" id="uc012ccu.1">
    <molecule id="Q6P2L7-2"/>
    <property type="organism name" value="mouse"/>
</dbReference>
<dbReference type="UCSC" id="uc012ccv.1">
    <molecule id="Q6P2L7-3"/>
    <property type="organism name" value="mouse"/>
</dbReference>
<dbReference type="AGR" id="MGI:2443129"/>
<dbReference type="CTD" id="113201"/>
<dbReference type="MGI" id="MGI:2443129">
    <property type="gene designation" value="Golm2"/>
</dbReference>
<dbReference type="VEuPathDB" id="HostDB:ENSMUSG00000060227"/>
<dbReference type="eggNOG" id="ENOG502QTYH">
    <property type="taxonomic scope" value="Eukaryota"/>
</dbReference>
<dbReference type="GeneTree" id="ENSGT00530000063675"/>
<dbReference type="HOGENOM" id="CLU_052047_1_0_1"/>
<dbReference type="InParanoid" id="Q6P2L7"/>
<dbReference type="OMA" id="XRFFDEN"/>
<dbReference type="OrthoDB" id="10072022at2759"/>
<dbReference type="PhylomeDB" id="Q6P2L7"/>
<dbReference type="TreeFam" id="TF331127"/>
<dbReference type="BioGRID-ORCS" id="319996">
    <property type="hits" value="0 hits in 77 CRISPR screens"/>
</dbReference>
<dbReference type="ChiTaRS" id="Casc4">
    <property type="organism name" value="mouse"/>
</dbReference>
<dbReference type="PRO" id="PR:Q6P2L7"/>
<dbReference type="Proteomes" id="UP000000589">
    <property type="component" value="Chromosome 2"/>
</dbReference>
<dbReference type="RNAct" id="Q6P2L7">
    <property type="molecule type" value="protein"/>
</dbReference>
<dbReference type="Bgee" id="ENSMUSG00000060227">
    <property type="expression patterns" value="Expressed in humerus cartilage element and 227 other cell types or tissues"/>
</dbReference>
<dbReference type="ExpressionAtlas" id="Q6P2L7">
    <property type="expression patterns" value="baseline and differential"/>
</dbReference>
<dbReference type="GO" id="GO:0005794">
    <property type="term" value="C:Golgi apparatus"/>
    <property type="evidence" value="ECO:0007669"/>
    <property type="project" value="Ensembl"/>
</dbReference>
<dbReference type="GO" id="GO:0016020">
    <property type="term" value="C:membrane"/>
    <property type="evidence" value="ECO:0007669"/>
    <property type="project" value="UniProtKB-SubCell"/>
</dbReference>
<dbReference type="InterPro" id="IPR026139">
    <property type="entry name" value="GOLM1/CASC4"/>
</dbReference>
<dbReference type="PANTHER" id="PTHR15896">
    <property type="entry name" value="GOLGI PHOSPHOPROTEIN 2/GP73-RELATED"/>
    <property type="match status" value="1"/>
</dbReference>
<dbReference type="PANTHER" id="PTHR15896:SF7">
    <property type="entry name" value="PROTEIN GOLM2"/>
    <property type="match status" value="1"/>
</dbReference>
<dbReference type="PRINTS" id="PR02084">
    <property type="entry name" value="GOLM1CASC4"/>
</dbReference>
<proteinExistence type="evidence at protein level"/>
<evidence type="ECO:0000250" key="1">
    <source>
        <dbReference type="UniProtKB" id="Q6P4E1"/>
    </source>
</evidence>
<evidence type="ECO:0000255" key="2"/>
<evidence type="ECO:0000256" key="3">
    <source>
        <dbReference type="SAM" id="MobiDB-lite"/>
    </source>
</evidence>
<evidence type="ECO:0000303" key="4">
    <source ref="1"/>
</evidence>
<evidence type="ECO:0000305" key="5"/>
<evidence type="ECO:0000312" key="6">
    <source>
        <dbReference type="MGI" id="MGI:2443129"/>
    </source>
</evidence>
<evidence type="ECO:0007744" key="7">
    <source>
    </source>
</evidence>
<sequence length="435" mass="49409">MVGFGANRRAGRLPSFVLVVLLVVIVVLAFNYWSISSRHVLLQEEVAELQGQVQRTEVARGRLEKRNSDLLLLVDTHKKQIDQKEADYGRLSSRLQAKEGLGKRCEDDKVKLQNNISYQMADIHHLKEQLAELRQEFLRQEDQLQDYRKNNTYLVKRLEYESFQCGQQIKELRAQHEENIKKLADQFLQEQKETHKIQSNDGKELGRNDHGAPKNIPNVPENDANKNEDPSSNHLPHGKEQLKRVGDAGMPGVEENDLAKVDELPAALKKPPVLASQHESHQTISHLPTGQPLSPNMAPGSHLNQNENPSTSKQNPSNPLQHIIPGPNLDREPRIQTDTLKQATRDRANDFHKLKQSRFFDENESPVDPQHGSKLADYNGDDGNVGEYEADKQAELAYNEEEDGDGGEEDVQDDEERELQMDPADYGKQRFSDVL</sequence>
<feature type="chain" id="PRO_0000291844" description="Protein GOLM2">
    <location>
        <begin position="1"/>
        <end position="435"/>
    </location>
</feature>
<feature type="topological domain" description="Cytoplasmic" evidence="2">
    <location>
        <begin position="1"/>
        <end position="14"/>
    </location>
</feature>
<feature type="transmembrane region" description="Helical; Signal-anchor for type II membrane protein" evidence="2">
    <location>
        <begin position="15"/>
        <end position="35"/>
    </location>
</feature>
<feature type="topological domain" description="Lumenal" evidence="2">
    <location>
        <begin position="36"/>
        <end position="435"/>
    </location>
</feature>
<feature type="region of interest" description="Disordered" evidence="3">
    <location>
        <begin position="191"/>
        <end position="239"/>
    </location>
</feature>
<feature type="region of interest" description="Disordered" evidence="3">
    <location>
        <begin position="271"/>
        <end position="435"/>
    </location>
</feature>
<feature type="coiled-coil region" evidence="2">
    <location>
        <begin position="35"/>
        <end position="194"/>
    </location>
</feature>
<feature type="compositionally biased region" description="Basic and acidic residues" evidence="3">
    <location>
        <begin position="191"/>
        <end position="212"/>
    </location>
</feature>
<feature type="compositionally biased region" description="Basic and acidic residues" evidence="3">
    <location>
        <begin position="223"/>
        <end position="239"/>
    </location>
</feature>
<feature type="compositionally biased region" description="Polar residues" evidence="3">
    <location>
        <begin position="282"/>
        <end position="294"/>
    </location>
</feature>
<feature type="compositionally biased region" description="Polar residues" evidence="3">
    <location>
        <begin position="302"/>
        <end position="320"/>
    </location>
</feature>
<feature type="compositionally biased region" description="Basic and acidic residues" evidence="3">
    <location>
        <begin position="343"/>
        <end position="361"/>
    </location>
</feature>
<feature type="compositionally biased region" description="Acidic residues" evidence="3">
    <location>
        <begin position="398"/>
        <end position="417"/>
    </location>
</feature>
<feature type="compositionally biased region" description="Basic and acidic residues" evidence="3">
    <location>
        <begin position="425"/>
        <end position="435"/>
    </location>
</feature>
<feature type="modified residue" description="N-acetylmethionine" evidence="1">
    <location>
        <position position="1"/>
    </location>
</feature>
<feature type="modified residue" description="Phosphoserine" evidence="1">
    <location>
        <position position="232"/>
    </location>
</feature>
<feature type="modified residue" description="Phosphoserine" evidence="7">
    <location>
        <position position="365"/>
    </location>
</feature>
<feature type="splice variant" id="VSP_026263" description="In isoform 2 and isoform 3." evidence="4">
    <location>
        <begin position="267"/>
        <end position="299"/>
    </location>
</feature>
<feature type="splice variant" id="VSP_026264" description="In isoform 3." evidence="4">
    <original>S</original>
    <variation>N</variation>
    <location>
        <position position="357"/>
    </location>
</feature>
<feature type="splice variant" id="VSP_026265" description="In isoform 3." evidence="4">
    <location>
        <begin position="358"/>
        <end position="413"/>
    </location>
</feature>
<comment type="subcellular location">
    <subcellularLocation>
        <location evidence="5">Membrane</location>
        <topology evidence="5">Single-pass type II membrane protein</topology>
    </subcellularLocation>
</comment>
<comment type="alternative products">
    <event type="alternative splicing"/>
    <isoform>
        <id>Q6P2L7-1</id>
        <name>1</name>
        <sequence type="displayed"/>
    </isoform>
    <isoform>
        <id>Q6P2L7-2</id>
        <name>2</name>
        <sequence type="described" ref="VSP_026263"/>
    </isoform>
    <isoform>
        <id>Q6P2L7-3</id>
        <name>3</name>
        <sequence type="described" ref="VSP_026263 VSP_026264 VSP_026265"/>
    </isoform>
</comment>
<comment type="similarity">
    <text evidence="5">Belongs to the GOLM family.</text>
</comment>
<comment type="sequence caution" evidence="5">
    <conflict type="frameshift">
        <sequence resource="EMBL-CDS" id="AAR26705"/>
    </conflict>
</comment>
<reference key="1">
    <citation type="submission" date="2003-11" db="EMBL/GenBank/DDBJ databases">
        <authorList>
            <person name="Zhou G."/>
            <person name="Liu X."/>
            <person name="Li H."/>
        </authorList>
    </citation>
    <scope>NUCLEOTIDE SEQUENCE [MRNA] (ISOFORMS 2 AND 3)</scope>
    <source>
        <strain>C57BL/6J</strain>
    </source>
</reference>
<reference key="2">
    <citation type="journal article" date="2009" name="PLoS Biol.">
        <title>Lineage-specific biology revealed by a finished genome assembly of the mouse.</title>
        <authorList>
            <person name="Church D.M."/>
            <person name="Goodstadt L."/>
            <person name="Hillier L.W."/>
            <person name="Zody M.C."/>
            <person name="Goldstein S."/>
            <person name="She X."/>
            <person name="Bult C.J."/>
            <person name="Agarwala R."/>
            <person name="Cherry J.L."/>
            <person name="DiCuccio M."/>
            <person name="Hlavina W."/>
            <person name="Kapustin Y."/>
            <person name="Meric P."/>
            <person name="Maglott D."/>
            <person name="Birtle Z."/>
            <person name="Marques A.C."/>
            <person name="Graves T."/>
            <person name="Zhou S."/>
            <person name="Teague B."/>
            <person name="Potamousis K."/>
            <person name="Churas C."/>
            <person name="Place M."/>
            <person name="Herschleb J."/>
            <person name="Runnheim R."/>
            <person name="Forrest D."/>
            <person name="Amos-Landgraf J."/>
            <person name="Schwartz D.C."/>
            <person name="Cheng Z."/>
            <person name="Lindblad-Toh K."/>
            <person name="Eichler E.E."/>
            <person name="Ponting C.P."/>
        </authorList>
    </citation>
    <scope>NUCLEOTIDE SEQUENCE [LARGE SCALE GENOMIC DNA]</scope>
    <source>
        <strain>C57BL/6J</strain>
    </source>
</reference>
<reference key="3">
    <citation type="journal article" date="2004" name="Genome Res.">
        <title>The status, quality, and expansion of the NIH full-length cDNA project: the Mammalian Gene Collection (MGC).</title>
        <authorList>
            <consortium name="The MGC Project Team"/>
        </authorList>
    </citation>
    <scope>NUCLEOTIDE SEQUENCE [LARGE SCALE MRNA] (ISOFORM 1)</scope>
    <source>
        <strain>C57BL/6J</strain>
        <tissue>Brain</tissue>
    </source>
</reference>
<reference key="4">
    <citation type="journal article" date="2005" name="Science">
        <title>The transcriptional landscape of the mammalian genome.</title>
        <authorList>
            <person name="Carninci P."/>
            <person name="Kasukawa T."/>
            <person name="Katayama S."/>
            <person name="Gough J."/>
            <person name="Frith M.C."/>
            <person name="Maeda N."/>
            <person name="Oyama R."/>
            <person name="Ravasi T."/>
            <person name="Lenhard B."/>
            <person name="Wells C."/>
            <person name="Kodzius R."/>
            <person name="Shimokawa K."/>
            <person name="Bajic V.B."/>
            <person name="Brenner S.E."/>
            <person name="Batalov S."/>
            <person name="Forrest A.R."/>
            <person name="Zavolan M."/>
            <person name="Davis M.J."/>
            <person name="Wilming L.G."/>
            <person name="Aidinis V."/>
            <person name="Allen J.E."/>
            <person name="Ambesi-Impiombato A."/>
            <person name="Apweiler R."/>
            <person name="Aturaliya R.N."/>
            <person name="Bailey T.L."/>
            <person name="Bansal M."/>
            <person name="Baxter L."/>
            <person name="Beisel K.W."/>
            <person name="Bersano T."/>
            <person name="Bono H."/>
            <person name="Chalk A.M."/>
            <person name="Chiu K.P."/>
            <person name="Choudhary V."/>
            <person name="Christoffels A."/>
            <person name="Clutterbuck D.R."/>
            <person name="Crowe M.L."/>
            <person name="Dalla E."/>
            <person name="Dalrymple B.P."/>
            <person name="de Bono B."/>
            <person name="Della Gatta G."/>
            <person name="di Bernardo D."/>
            <person name="Down T."/>
            <person name="Engstrom P."/>
            <person name="Fagiolini M."/>
            <person name="Faulkner G."/>
            <person name="Fletcher C.F."/>
            <person name="Fukushima T."/>
            <person name="Furuno M."/>
            <person name="Futaki S."/>
            <person name="Gariboldi M."/>
            <person name="Georgii-Hemming P."/>
            <person name="Gingeras T.R."/>
            <person name="Gojobori T."/>
            <person name="Green R.E."/>
            <person name="Gustincich S."/>
            <person name="Harbers M."/>
            <person name="Hayashi Y."/>
            <person name="Hensch T.K."/>
            <person name="Hirokawa N."/>
            <person name="Hill D."/>
            <person name="Huminiecki L."/>
            <person name="Iacono M."/>
            <person name="Ikeo K."/>
            <person name="Iwama A."/>
            <person name="Ishikawa T."/>
            <person name="Jakt M."/>
            <person name="Kanapin A."/>
            <person name="Katoh M."/>
            <person name="Kawasawa Y."/>
            <person name="Kelso J."/>
            <person name="Kitamura H."/>
            <person name="Kitano H."/>
            <person name="Kollias G."/>
            <person name="Krishnan S.P."/>
            <person name="Kruger A."/>
            <person name="Kummerfeld S.K."/>
            <person name="Kurochkin I.V."/>
            <person name="Lareau L.F."/>
            <person name="Lazarevic D."/>
            <person name="Lipovich L."/>
            <person name="Liu J."/>
            <person name="Liuni S."/>
            <person name="McWilliam S."/>
            <person name="Madan Babu M."/>
            <person name="Madera M."/>
            <person name="Marchionni L."/>
            <person name="Matsuda H."/>
            <person name="Matsuzawa S."/>
            <person name="Miki H."/>
            <person name="Mignone F."/>
            <person name="Miyake S."/>
            <person name="Morris K."/>
            <person name="Mottagui-Tabar S."/>
            <person name="Mulder N."/>
            <person name="Nakano N."/>
            <person name="Nakauchi H."/>
            <person name="Ng P."/>
            <person name="Nilsson R."/>
            <person name="Nishiguchi S."/>
            <person name="Nishikawa S."/>
            <person name="Nori F."/>
            <person name="Ohara O."/>
            <person name="Okazaki Y."/>
            <person name="Orlando V."/>
            <person name="Pang K.C."/>
            <person name="Pavan W.J."/>
            <person name="Pavesi G."/>
            <person name="Pesole G."/>
            <person name="Petrovsky N."/>
            <person name="Piazza S."/>
            <person name="Reed J."/>
            <person name="Reid J.F."/>
            <person name="Ring B.Z."/>
            <person name="Ringwald M."/>
            <person name="Rost B."/>
            <person name="Ruan Y."/>
            <person name="Salzberg S.L."/>
            <person name="Sandelin A."/>
            <person name="Schneider C."/>
            <person name="Schoenbach C."/>
            <person name="Sekiguchi K."/>
            <person name="Semple C.A."/>
            <person name="Seno S."/>
            <person name="Sessa L."/>
            <person name="Sheng Y."/>
            <person name="Shibata Y."/>
            <person name="Shimada H."/>
            <person name="Shimada K."/>
            <person name="Silva D."/>
            <person name="Sinclair B."/>
            <person name="Sperling S."/>
            <person name="Stupka E."/>
            <person name="Sugiura K."/>
            <person name="Sultana R."/>
            <person name="Takenaka Y."/>
            <person name="Taki K."/>
            <person name="Tammoja K."/>
            <person name="Tan S.L."/>
            <person name="Tang S."/>
            <person name="Taylor M.S."/>
            <person name="Tegner J."/>
            <person name="Teichmann S.A."/>
            <person name="Ueda H.R."/>
            <person name="van Nimwegen E."/>
            <person name="Verardo R."/>
            <person name="Wei C.L."/>
            <person name="Yagi K."/>
            <person name="Yamanishi H."/>
            <person name="Zabarovsky E."/>
            <person name="Zhu S."/>
            <person name="Zimmer A."/>
            <person name="Hide W."/>
            <person name="Bult C."/>
            <person name="Grimmond S.M."/>
            <person name="Teasdale R.D."/>
            <person name="Liu E.T."/>
            <person name="Brusic V."/>
            <person name="Quackenbush J."/>
            <person name="Wahlestedt C."/>
            <person name="Mattick J.S."/>
            <person name="Hume D.A."/>
            <person name="Kai C."/>
            <person name="Sasaki D."/>
            <person name="Tomaru Y."/>
            <person name="Fukuda S."/>
            <person name="Kanamori-Katayama M."/>
            <person name="Suzuki M."/>
            <person name="Aoki J."/>
            <person name="Arakawa T."/>
            <person name="Iida J."/>
            <person name="Imamura K."/>
            <person name="Itoh M."/>
            <person name="Kato T."/>
            <person name="Kawaji H."/>
            <person name="Kawagashira N."/>
            <person name="Kawashima T."/>
            <person name="Kojima M."/>
            <person name="Kondo S."/>
            <person name="Konno H."/>
            <person name="Nakano K."/>
            <person name="Ninomiya N."/>
            <person name="Nishio T."/>
            <person name="Okada M."/>
            <person name="Plessy C."/>
            <person name="Shibata K."/>
            <person name="Shiraki T."/>
            <person name="Suzuki S."/>
            <person name="Tagami M."/>
            <person name="Waki K."/>
            <person name="Watahiki A."/>
            <person name="Okamura-Oho Y."/>
            <person name="Suzuki H."/>
            <person name="Kawai J."/>
            <person name="Hayashizaki Y."/>
        </authorList>
    </citation>
    <scope>NUCLEOTIDE SEQUENCE [LARGE SCALE MRNA] OF 1-176 (ISOFORMS 1/2/3)</scope>
    <source>
        <strain>C57BL/6J</strain>
        <tissue>Thymus</tissue>
    </source>
</reference>
<reference key="5">
    <citation type="journal article" date="2010" name="Cell">
        <title>A tissue-specific atlas of mouse protein phosphorylation and expression.</title>
        <authorList>
            <person name="Huttlin E.L."/>
            <person name="Jedrychowski M.P."/>
            <person name="Elias J.E."/>
            <person name="Goswami T."/>
            <person name="Rad R."/>
            <person name="Beausoleil S.A."/>
            <person name="Villen J."/>
            <person name="Haas W."/>
            <person name="Sowa M.E."/>
            <person name="Gygi S.P."/>
        </authorList>
    </citation>
    <scope>PHOSPHORYLATION [LARGE SCALE ANALYSIS] AT SER-365</scope>
    <scope>IDENTIFICATION BY MASS SPECTROMETRY [LARGE SCALE ANALYSIS]</scope>
    <source>
        <tissue>Brain</tissue>
        <tissue>Kidney</tissue>
        <tissue>Testis</tissue>
    </source>
</reference>
<name>GOLM2_MOUSE</name>
<accession>Q6P2L7</accession>
<accession>A2AR57</accession>
<accession>Q6RZW5</accession>
<accession>Q6RZW6</accession>
<accession>Q8C4Z2</accession>
<gene>
    <name evidence="6" type="primary">Golm2</name>
    <name evidence="6" type="synonym">Casc4</name>
</gene>
<organism>
    <name type="scientific">Mus musculus</name>
    <name type="common">Mouse</name>
    <dbReference type="NCBI Taxonomy" id="10090"/>
    <lineage>
        <taxon>Eukaryota</taxon>
        <taxon>Metazoa</taxon>
        <taxon>Chordata</taxon>
        <taxon>Craniata</taxon>
        <taxon>Vertebrata</taxon>
        <taxon>Euteleostomi</taxon>
        <taxon>Mammalia</taxon>
        <taxon>Eutheria</taxon>
        <taxon>Euarchontoglires</taxon>
        <taxon>Glires</taxon>
        <taxon>Rodentia</taxon>
        <taxon>Myomorpha</taxon>
        <taxon>Muroidea</taxon>
        <taxon>Muridae</taxon>
        <taxon>Murinae</taxon>
        <taxon>Mus</taxon>
        <taxon>Mus</taxon>
    </lineage>
</organism>